<feature type="chain" id="PRO_0000197495" description="Glutathione synthetase">
    <location>
        <begin position="1"/>
        <end position="316"/>
    </location>
</feature>
<feature type="domain" description="ATP-grasp" evidence="2">
    <location>
        <begin position="123"/>
        <end position="309"/>
    </location>
</feature>
<feature type="binding site" evidence="2">
    <location>
        <begin position="149"/>
        <end position="206"/>
    </location>
    <ligand>
        <name>ATP</name>
        <dbReference type="ChEBI" id="CHEBI:30616"/>
    </ligand>
</feature>
<feature type="binding site" evidence="2">
    <location>
        <position position="280"/>
    </location>
    <ligand>
        <name>Mg(2+)</name>
        <dbReference type="ChEBI" id="CHEBI:18420"/>
    </ligand>
</feature>
<feature type="binding site" evidence="2">
    <location>
        <position position="282"/>
    </location>
    <ligand>
        <name>Mg(2+)</name>
        <dbReference type="ChEBI" id="CHEBI:18420"/>
    </ligand>
</feature>
<reference key="1">
    <citation type="journal article" date="2002" name="Nat. Genet.">
        <title>Genome sequence of the endocellular obligate symbiont of tsetse flies, Wigglesworthia glossinidia.</title>
        <authorList>
            <person name="Akman L."/>
            <person name="Yamashita A."/>
            <person name="Watanabe H."/>
            <person name="Oshima K."/>
            <person name="Shiba T."/>
            <person name="Hattori M."/>
            <person name="Aksoy S."/>
        </authorList>
    </citation>
    <scope>NUCLEOTIDE SEQUENCE [LARGE SCALE GENOMIC DNA]</scope>
</reference>
<dbReference type="EC" id="6.3.2.3" evidence="2"/>
<dbReference type="EMBL" id="BA000021">
    <property type="protein sequence ID" value="BAC24312.1"/>
    <property type="status" value="ALT_INIT"/>
    <property type="molecule type" value="Genomic_DNA"/>
</dbReference>
<dbReference type="SMR" id="Q8D335"/>
<dbReference type="STRING" id="36870.gene:10368654"/>
<dbReference type="KEGG" id="wbr:gshB"/>
<dbReference type="eggNOG" id="COG0189">
    <property type="taxonomic scope" value="Bacteria"/>
</dbReference>
<dbReference type="HOGENOM" id="CLU_068239_0_0_6"/>
<dbReference type="OrthoDB" id="9785415at2"/>
<dbReference type="UniPathway" id="UPA00142">
    <property type="reaction ID" value="UER00210"/>
</dbReference>
<dbReference type="Proteomes" id="UP000000562">
    <property type="component" value="Chromosome"/>
</dbReference>
<dbReference type="GO" id="GO:0005737">
    <property type="term" value="C:cytoplasm"/>
    <property type="evidence" value="ECO:0007669"/>
    <property type="project" value="TreeGrafter"/>
</dbReference>
<dbReference type="GO" id="GO:0005524">
    <property type="term" value="F:ATP binding"/>
    <property type="evidence" value="ECO:0007669"/>
    <property type="project" value="UniProtKB-UniRule"/>
</dbReference>
<dbReference type="GO" id="GO:0004363">
    <property type="term" value="F:glutathione synthase activity"/>
    <property type="evidence" value="ECO:0007669"/>
    <property type="project" value="UniProtKB-UniRule"/>
</dbReference>
<dbReference type="GO" id="GO:0046872">
    <property type="term" value="F:metal ion binding"/>
    <property type="evidence" value="ECO:0007669"/>
    <property type="project" value="UniProtKB-KW"/>
</dbReference>
<dbReference type="FunFam" id="3.40.50.20:FF:000009">
    <property type="entry name" value="Glutathione synthetase"/>
    <property type="match status" value="1"/>
</dbReference>
<dbReference type="Gene3D" id="3.40.50.20">
    <property type="match status" value="1"/>
</dbReference>
<dbReference type="Gene3D" id="3.30.1490.20">
    <property type="entry name" value="ATP-grasp fold, A domain"/>
    <property type="match status" value="1"/>
</dbReference>
<dbReference type="Gene3D" id="3.30.470.20">
    <property type="entry name" value="ATP-grasp fold, B domain"/>
    <property type="match status" value="1"/>
</dbReference>
<dbReference type="HAMAP" id="MF_00162">
    <property type="entry name" value="GSH_S"/>
    <property type="match status" value="1"/>
</dbReference>
<dbReference type="InterPro" id="IPR011761">
    <property type="entry name" value="ATP-grasp"/>
</dbReference>
<dbReference type="InterPro" id="IPR013815">
    <property type="entry name" value="ATP_grasp_subdomain_1"/>
</dbReference>
<dbReference type="InterPro" id="IPR006284">
    <property type="entry name" value="Glut_synth_pro"/>
</dbReference>
<dbReference type="InterPro" id="IPR004218">
    <property type="entry name" value="GSHS_ATP-bd"/>
</dbReference>
<dbReference type="InterPro" id="IPR004215">
    <property type="entry name" value="GSHS_N"/>
</dbReference>
<dbReference type="InterPro" id="IPR016185">
    <property type="entry name" value="PreATP-grasp_dom_sf"/>
</dbReference>
<dbReference type="NCBIfam" id="TIGR01380">
    <property type="entry name" value="glut_syn"/>
    <property type="match status" value="1"/>
</dbReference>
<dbReference type="NCBIfam" id="NF003573">
    <property type="entry name" value="PRK05246.1"/>
    <property type="match status" value="1"/>
</dbReference>
<dbReference type="PANTHER" id="PTHR21621:SF4">
    <property type="entry name" value="GLUTATHIONE SYNTHETASE"/>
    <property type="match status" value="1"/>
</dbReference>
<dbReference type="PANTHER" id="PTHR21621">
    <property type="entry name" value="RIBOSOMAL PROTEIN S6 MODIFICATION PROTEIN"/>
    <property type="match status" value="1"/>
</dbReference>
<dbReference type="Pfam" id="PF02955">
    <property type="entry name" value="GSH-S_ATP"/>
    <property type="match status" value="1"/>
</dbReference>
<dbReference type="Pfam" id="PF02951">
    <property type="entry name" value="GSH-S_N"/>
    <property type="match status" value="1"/>
</dbReference>
<dbReference type="SUPFAM" id="SSF56059">
    <property type="entry name" value="Glutathione synthetase ATP-binding domain-like"/>
    <property type="match status" value="1"/>
</dbReference>
<dbReference type="SUPFAM" id="SSF52440">
    <property type="entry name" value="PreATP-grasp domain"/>
    <property type="match status" value="1"/>
</dbReference>
<dbReference type="PROSITE" id="PS50975">
    <property type="entry name" value="ATP_GRASP"/>
    <property type="match status" value="1"/>
</dbReference>
<organism>
    <name type="scientific">Wigglesworthia glossinidia brevipalpis</name>
    <dbReference type="NCBI Taxonomy" id="36870"/>
    <lineage>
        <taxon>Bacteria</taxon>
        <taxon>Pseudomonadati</taxon>
        <taxon>Pseudomonadota</taxon>
        <taxon>Gammaproteobacteria</taxon>
        <taxon>Enterobacterales</taxon>
        <taxon>Erwiniaceae</taxon>
        <taxon>Wigglesworthia</taxon>
    </lineage>
</organism>
<comment type="catalytic activity">
    <reaction evidence="2">
        <text>gamma-L-glutamyl-L-cysteine + glycine + ATP = glutathione + ADP + phosphate + H(+)</text>
        <dbReference type="Rhea" id="RHEA:13557"/>
        <dbReference type="ChEBI" id="CHEBI:15378"/>
        <dbReference type="ChEBI" id="CHEBI:30616"/>
        <dbReference type="ChEBI" id="CHEBI:43474"/>
        <dbReference type="ChEBI" id="CHEBI:57305"/>
        <dbReference type="ChEBI" id="CHEBI:57925"/>
        <dbReference type="ChEBI" id="CHEBI:58173"/>
        <dbReference type="ChEBI" id="CHEBI:456216"/>
        <dbReference type="EC" id="6.3.2.3"/>
    </reaction>
</comment>
<comment type="cofactor">
    <cofactor evidence="1">
        <name>Mg(2+)</name>
        <dbReference type="ChEBI" id="CHEBI:18420"/>
    </cofactor>
    <cofactor evidence="1">
        <name>Mn(2+)</name>
        <dbReference type="ChEBI" id="CHEBI:29035"/>
    </cofactor>
    <text evidence="1">Binds 1 Mg(2+) or Mn(2+) ion per subunit.</text>
</comment>
<comment type="pathway">
    <text evidence="2">Sulfur metabolism; glutathione biosynthesis; glutathione from L-cysteine and L-glutamate: step 2/2.</text>
</comment>
<comment type="similarity">
    <text evidence="2">Belongs to the prokaryotic GSH synthase family.</text>
</comment>
<comment type="sequence caution" evidence="3">
    <conflict type="erroneous initiation">
        <sequence resource="EMBL-CDS" id="BAC24312"/>
    </conflict>
</comment>
<evidence type="ECO:0000250" key="1"/>
<evidence type="ECO:0000255" key="2">
    <source>
        <dbReference type="HAMAP-Rule" id="MF_00162"/>
    </source>
</evidence>
<evidence type="ECO:0000305" key="3"/>
<keyword id="KW-0067">ATP-binding</keyword>
<keyword id="KW-0317">Glutathione biosynthesis</keyword>
<keyword id="KW-0436">Ligase</keyword>
<keyword id="KW-0460">Magnesium</keyword>
<keyword id="KW-0464">Manganese</keyword>
<keyword id="KW-0479">Metal-binding</keyword>
<keyword id="KW-0547">Nucleotide-binding</keyword>
<keyword id="KW-1185">Reference proteome</keyword>
<accession>Q8D335</accession>
<name>GSHB_WIGBR</name>
<sequence length="316" mass="36507">MIKLGIIMDPISSIKIKKDTSFSIMLEAQKRNYFLYYIEMKDIYYEVGEVYANSYLISVKYDEKKWYSFKKKYTINLKELDVILMRKDPPFDIEFLYITYILEHIENFGVLIINKPKSLRDYNEKISTLSFKYSPKTLISCSKKAIYSFQEKFGDIILKPINKMGGDSVFYVKKNDPNVSVIIDQLTNYGNSFCLIQEYIKEILNGDRRIIMINGSPLPYCLVRIPNDKEIRGNLAAGASFDILPLRKIDYEISNNISSFLKDKGLIFVGLDIIGNYLTEINITSPTGINEIESVYKVSISGILLDSIEKLLNIKH</sequence>
<gene>
    <name evidence="2" type="primary">gshB</name>
    <name type="ordered locus">WIGBR1660</name>
</gene>
<proteinExistence type="inferred from homology"/>
<protein>
    <recommendedName>
        <fullName evidence="2">Glutathione synthetase</fullName>
        <ecNumber evidence="2">6.3.2.3</ecNumber>
    </recommendedName>
    <alternativeName>
        <fullName evidence="2">GSH synthetase</fullName>
        <shortName evidence="2">GSH-S</shortName>
        <shortName evidence="2">GSHase</shortName>
    </alternativeName>
    <alternativeName>
        <fullName evidence="2">Glutathione synthase</fullName>
    </alternativeName>
</protein>